<name>SYN_MYCCT</name>
<proteinExistence type="inferred from homology"/>
<evidence type="ECO:0000255" key="1">
    <source>
        <dbReference type="HAMAP-Rule" id="MF_00534"/>
    </source>
</evidence>
<keyword id="KW-0030">Aminoacyl-tRNA synthetase</keyword>
<keyword id="KW-0067">ATP-binding</keyword>
<keyword id="KW-0963">Cytoplasm</keyword>
<keyword id="KW-0436">Ligase</keyword>
<keyword id="KW-0547">Nucleotide-binding</keyword>
<keyword id="KW-0648">Protein biosynthesis</keyword>
<gene>
    <name evidence="1" type="primary">asnS</name>
    <name type="ordered locus">MCAP_0824</name>
</gene>
<dbReference type="EC" id="6.1.1.22" evidence="1"/>
<dbReference type="EMBL" id="CP000123">
    <property type="protein sequence ID" value="ABC01510.1"/>
    <property type="molecule type" value="Genomic_DNA"/>
</dbReference>
<dbReference type="RefSeq" id="WP_011387655.1">
    <property type="nucleotide sequence ID" value="NC_007633.1"/>
</dbReference>
<dbReference type="SMR" id="Q2SR42"/>
<dbReference type="GeneID" id="23778224"/>
<dbReference type="KEGG" id="mcp:MCAP_0824"/>
<dbReference type="HOGENOM" id="CLU_004553_2_0_14"/>
<dbReference type="PhylomeDB" id="Q2SR42"/>
<dbReference type="Proteomes" id="UP000001928">
    <property type="component" value="Chromosome"/>
</dbReference>
<dbReference type="GO" id="GO:0005737">
    <property type="term" value="C:cytoplasm"/>
    <property type="evidence" value="ECO:0007669"/>
    <property type="project" value="UniProtKB-SubCell"/>
</dbReference>
<dbReference type="GO" id="GO:0004816">
    <property type="term" value="F:asparagine-tRNA ligase activity"/>
    <property type="evidence" value="ECO:0007669"/>
    <property type="project" value="UniProtKB-UniRule"/>
</dbReference>
<dbReference type="GO" id="GO:0005524">
    <property type="term" value="F:ATP binding"/>
    <property type="evidence" value="ECO:0007669"/>
    <property type="project" value="UniProtKB-UniRule"/>
</dbReference>
<dbReference type="GO" id="GO:0003676">
    <property type="term" value="F:nucleic acid binding"/>
    <property type="evidence" value="ECO:0007669"/>
    <property type="project" value="InterPro"/>
</dbReference>
<dbReference type="GO" id="GO:0006421">
    <property type="term" value="P:asparaginyl-tRNA aminoacylation"/>
    <property type="evidence" value="ECO:0007669"/>
    <property type="project" value="UniProtKB-UniRule"/>
</dbReference>
<dbReference type="CDD" id="cd00776">
    <property type="entry name" value="AsxRS_core"/>
    <property type="match status" value="1"/>
</dbReference>
<dbReference type="CDD" id="cd04318">
    <property type="entry name" value="EcAsnRS_like_N"/>
    <property type="match status" value="1"/>
</dbReference>
<dbReference type="FunFam" id="3.30.930.10:FF:000016">
    <property type="entry name" value="Asparagine--tRNA ligase"/>
    <property type="match status" value="1"/>
</dbReference>
<dbReference type="Gene3D" id="3.30.930.10">
    <property type="entry name" value="Bira Bifunctional Protein, Domain 2"/>
    <property type="match status" value="1"/>
</dbReference>
<dbReference type="Gene3D" id="2.40.50.140">
    <property type="entry name" value="Nucleic acid-binding proteins"/>
    <property type="match status" value="1"/>
</dbReference>
<dbReference type="HAMAP" id="MF_00534">
    <property type="entry name" value="Asn_tRNA_synth"/>
    <property type="match status" value="1"/>
</dbReference>
<dbReference type="InterPro" id="IPR004364">
    <property type="entry name" value="Aa-tRNA-synt_II"/>
</dbReference>
<dbReference type="InterPro" id="IPR006195">
    <property type="entry name" value="aa-tRNA-synth_II"/>
</dbReference>
<dbReference type="InterPro" id="IPR045864">
    <property type="entry name" value="aa-tRNA-synth_II/BPL/LPL"/>
</dbReference>
<dbReference type="InterPro" id="IPR004522">
    <property type="entry name" value="Asn-tRNA-ligase"/>
</dbReference>
<dbReference type="InterPro" id="IPR002312">
    <property type="entry name" value="Asp/Asn-tRNA-synth_IIb"/>
</dbReference>
<dbReference type="InterPro" id="IPR012340">
    <property type="entry name" value="NA-bd_OB-fold"/>
</dbReference>
<dbReference type="InterPro" id="IPR004365">
    <property type="entry name" value="NA-bd_OB_tRNA"/>
</dbReference>
<dbReference type="NCBIfam" id="TIGR00457">
    <property type="entry name" value="asnS"/>
    <property type="match status" value="1"/>
</dbReference>
<dbReference type="NCBIfam" id="NF003037">
    <property type="entry name" value="PRK03932.1"/>
    <property type="match status" value="1"/>
</dbReference>
<dbReference type="PANTHER" id="PTHR22594:SF34">
    <property type="entry name" value="ASPARAGINE--TRNA LIGASE, MITOCHONDRIAL-RELATED"/>
    <property type="match status" value="1"/>
</dbReference>
<dbReference type="PANTHER" id="PTHR22594">
    <property type="entry name" value="ASPARTYL/LYSYL-TRNA SYNTHETASE"/>
    <property type="match status" value="1"/>
</dbReference>
<dbReference type="Pfam" id="PF00152">
    <property type="entry name" value="tRNA-synt_2"/>
    <property type="match status" value="1"/>
</dbReference>
<dbReference type="Pfam" id="PF01336">
    <property type="entry name" value="tRNA_anti-codon"/>
    <property type="match status" value="1"/>
</dbReference>
<dbReference type="PRINTS" id="PR01042">
    <property type="entry name" value="TRNASYNTHASP"/>
</dbReference>
<dbReference type="SUPFAM" id="SSF55681">
    <property type="entry name" value="Class II aaRS and biotin synthetases"/>
    <property type="match status" value="1"/>
</dbReference>
<dbReference type="SUPFAM" id="SSF50249">
    <property type="entry name" value="Nucleic acid-binding proteins"/>
    <property type="match status" value="1"/>
</dbReference>
<dbReference type="PROSITE" id="PS50862">
    <property type="entry name" value="AA_TRNA_LIGASE_II"/>
    <property type="match status" value="1"/>
</dbReference>
<organism>
    <name type="scientific">Mycoplasma capricolum subsp. capricolum (strain California kid / ATCC 27343 / NCTC 10154)</name>
    <dbReference type="NCBI Taxonomy" id="340047"/>
    <lineage>
        <taxon>Bacteria</taxon>
        <taxon>Bacillati</taxon>
        <taxon>Mycoplasmatota</taxon>
        <taxon>Mollicutes</taxon>
        <taxon>Mycoplasmataceae</taxon>
        <taxon>Mycoplasma</taxon>
    </lineage>
</organism>
<reference key="1">
    <citation type="submission" date="2005-09" db="EMBL/GenBank/DDBJ databases">
        <authorList>
            <person name="Glass J.I."/>
            <person name="Lartigue C."/>
            <person name="Pfannkoch C."/>
            <person name="Baden-Tillson H."/>
            <person name="Smith H.O."/>
            <person name="Venter J.C."/>
            <person name="Roske K."/>
            <person name="Wise K.S."/>
            <person name="Calcutt M.J."/>
            <person name="Nelson W.C."/>
            <person name="Nierman W.C."/>
        </authorList>
    </citation>
    <scope>NUCLEOTIDE SEQUENCE [LARGE SCALE GENOMIC DNA]</scope>
    <source>
        <strain>California kid / ATCC 27343 / NCTC 10154</strain>
    </source>
</reference>
<comment type="catalytic activity">
    <reaction evidence="1">
        <text>tRNA(Asn) + L-asparagine + ATP = L-asparaginyl-tRNA(Asn) + AMP + diphosphate + H(+)</text>
        <dbReference type="Rhea" id="RHEA:11180"/>
        <dbReference type="Rhea" id="RHEA-COMP:9659"/>
        <dbReference type="Rhea" id="RHEA-COMP:9674"/>
        <dbReference type="ChEBI" id="CHEBI:15378"/>
        <dbReference type="ChEBI" id="CHEBI:30616"/>
        <dbReference type="ChEBI" id="CHEBI:33019"/>
        <dbReference type="ChEBI" id="CHEBI:58048"/>
        <dbReference type="ChEBI" id="CHEBI:78442"/>
        <dbReference type="ChEBI" id="CHEBI:78515"/>
        <dbReference type="ChEBI" id="CHEBI:456215"/>
        <dbReference type="EC" id="6.1.1.22"/>
    </reaction>
</comment>
<comment type="subunit">
    <text evidence="1">Homodimer.</text>
</comment>
<comment type="subcellular location">
    <subcellularLocation>
        <location evidence="1">Cytoplasm</location>
    </subcellularLocation>
</comment>
<comment type="similarity">
    <text evidence="1">Belongs to the class-II aminoacyl-tRNA synthetase family.</text>
</comment>
<accession>Q2SR42</accession>
<feature type="chain" id="PRO_1000051408" description="Asparagine--tRNA ligase">
    <location>
        <begin position="1"/>
        <end position="454"/>
    </location>
</feature>
<sequence length="454" mass="52217">MEIKQVFEQNSELIDQEIELIARVRSNRQGKFVSFMILNDGTTFTDLQVVYKTKTKGYEQALQARVSSIVKVIGRVVLTPEKQQKFEVQADAIELIDQAIEDYPLQKKEHTTEYLREIAHLRAKTKTFNAIFKIRSAAAYAIHKFFNDRGFVYIHSPIITSNDAEGAGEAFLVTTREDADYEKDFFAKKASLTVSGQLHAEAFAQAFKKVYTFGPTFRAENSNTAKHAAEFWMIEPEVAFADLKDNIQLIQDMVKYIINYIFKHNRRELEFCNEHLEDGLIDKLNSVRNSEFKVTTYTEAIEILKQAVANGHKFEVSDIEFGLDLGTEHERYICEQVNKAPTFVTNYPKEIKAFYMKQNEDNKTVAAVDLLVPGIGELVGGSQREDNYEKLIKRCKEVNIDIDQLEWYNNLRLYGYYKSAGFGLGFERLIMYITGASNIRDVIPFPRTPKNLLF</sequence>
<protein>
    <recommendedName>
        <fullName evidence="1">Asparagine--tRNA ligase</fullName>
        <ecNumber evidence="1">6.1.1.22</ecNumber>
    </recommendedName>
    <alternativeName>
        <fullName evidence="1">Asparaginyl-tRNA synthetase</fullName>
        <shortName evidence="1">AsnRS</shortName>
    </alternativeName>
</protein>